<accession>Q6PZ02</accession>
<accession>Q5ZK72</accession>
<gene>
    <name evidence="1" type="primary">ATG4B</name>
    <name evidence="1" type="synonym">APG4B</name>
    <name evidence="3" type="synonym">AUT2B</name>
    <name evidence="4" type="ORF">RCJMB04_12m14</name>
</gene>
<name>ATG4B_CHICK</name>
<comment type="function">
    <text evidence="1 2">Cysteine protease that plays a key role in autophagy by mediating both proteolytic activation and delipidation of ATG8 family proteins (PubMed:15140988). Required for canonical autophagy (macroautophagy), non-canonical autophagy as well as for mitophagy. The protease activity is required for proteolytic activation of ATG8 family proteins: cleaves the C-terminal amino acid of ATG8 proteins to reveal a C-terminal glycine. Exposure of the glycine at the C-terminus is essential for ATG8 proteins conjugation to phosphatidylethanolamine (PE) and insertion to membranes, which is necessary for autophagy. Protease activity is also required to counteract formation of high-molecular weight conjugates of ATG8 proteins (ATG8ylation): acts as a deubiquitinating-like enzyme that removes ATG8 conjugated to other proteins, such as ATG3. In addition to the protease activity, also mediates delipidation of ATG8 family proteins. Catalyzes delipidation of PE-conjugated forms of ATG8 proteins during macroautophagy. Also involved in non-canonical autophagy, a parallel pathway involving conjugation of ATG8 proteins to single membranes at endolysosomal compartments, by catalyzing delipidation of ATG8 proteins conjugated to phosphatidylserine (PS).</text>
</comment>
<comment type="catalytic activity">
    <reaction evidence="1">
        <text>[protein]-C-terminal L-amino acid-glycyl-phosphatidylethanolamide + H2O = [protein]-C-terminal L-amino acid-glycine + a 1,2-diacyl-sn-glycero-3-phosphoethanolamine</text>
        <dbReference type="Rhea" id="RHEA:67548"/>
        <dbReference type="Rhea" id="RHEA-COMP:17323"/>
        <dbReference type="Rhea" id="RHEA-COMP:17324"/>
        <dbReference type="ChEBI" id="CHEBI:15377"/>
        <dbReference type="ChEBI" id="CHEBI:64612"/>
        <dbReference type="ChEBI" id="CHEBI:172940"/>
        <dbReference type="ChEBI" id="CHEBI:172941"/>
    </reaction>
    <physiologicalReaction direction="left-to-right" evidence="1">
        <dbReference type="Rhea" id="RHEA:67549"/>
    </physiologicalReaction>
</comment>
<comment type="catalytic activity">
    <reaction evidence="1">
        <text>[protein]-C-terminal L-amino acid-glycyl-phosphatidylserine + H2O = [protein]-C-terminal L-amino acid-glycine + a 1,2-diacyl-sn-glycero-3-phospho-L-serine</text>
        <dbReference type="Rhea" id="RHEA:67576"/>
        <dbReference type="Rhea" id="RHEA-COMP:17324"/>
        <dbReference type="Rhea" id="RHEA-COMP:17326"/>
        <dbReference type="ChEBI" id="CHEBI:15377"/>
        <dbReference type="ChEBI" id="CHEBI:57262"/>
        <dbReference type="ChEBI" id="CHEBI:172940"/>
        <dbReference type="ChEBI" id="CHEBI:172942"/>
    </reaction>
    <physiologicalReaction direction="left-to-right" evidence="1">
        <dbReference type="Rhea" id="RHEA:67577"/>
    </physiologicalReaction>
</comment>
<comment type="subcellular location">
    <subcellularLocation>
        <location evidence="1">Cytoplasm</location>
    </subcellularLocation>
    <subcellularLocation>
        <location evidence="1">Cytoplasm</location>
        <location evidence="1">Cytosol</location>
    </subcellularLocation>
    <subcellularLocation>
        <location evidence="1">Cytoplasmic vesicle</location>
        <location evidence="1">Autophagosome</location>
    </subcellularLocation>
    <subcellularLocation>
        <location evidence="1">Endoplasmic reticulum</location>
    </subcellularLocation>
    <subcellularLocation>
        <location evidence="1">Mitochondrion</location>
    </subcellularLocation>
    <text evidence="1">Mainly localizes to the cytoplasm, including cytosol.</text>
</comment>
<comment type="alternative products">
    <event type="alternative splicing"/>
    <isoform>
        <id>Q6PZ02-1</id>
        <name>1</name>
        <sequence type="displayed"/>
    </isoform>
    <isoform>
        <id>Q6PZ02-2</id>
        <name>2</name>
        <sequence type="described" ref="VSP_013035 VSP_013036"/>
    </isoform>
</comment>
<comment type="domain">
    <text evidence="1">The LIR motif (LC3-interacting region) is required for the interaction with ATG8 family proteins. Required for proteolytic activation and delipidation of ATG8 proteins.</text>
</comment>
<comment type="similarity">
    <text evidence="5">Belongs to the peptidase C54 family.</text>
</comment>
<protein>
    <recommendedName>
        <fullName evidence="5">Cysteine protease ATG4B</fullName>
        <ecNumber evidence="2">3.4.22.-</ecNumber>
    </recommendedName>
    <alternativeName>
        <fullName evidence="1">Autophagy-related cysteine endopeptidase 2B</fullName>
        <shortName evidence="1">Autophagin-2B</shortName>
        <shortName evidence="3">cAut2B</shortName>
    </alternativeName>
    <alternativeName>
        <fullName evidence="1">Autophagy-related protein 4 homolog B</fullName>
    </alternativeName>
</protein>
<keyword id="KW-0025">Alternative splicing</keyword>
<keyword id="KW-0072">Autophagy</keyword>
<keyword id="KW-0963">Cytoplasm</keyword>
<keyword id="KW-0968">Cytoplasmic vesicle</keyword>
<keyword id="KW-0256">Endoplasmic reticulum</keyword>
<keyword id="KW-0378">Hydrolase</keyword>
<keyword id="KW-0496">Mitochondrion</keyword>
<keyword id="KW-0645">Protease</keyword>
<keyword id="KW-0653">Protein transport</keyword>
<keyword id="KW-1185">Reference proteome</keyword>
<keyword id="KW-0788">Thiol protease</keyword>
<keyword id="KW-0813">Transport</keyword>
<keyword id="KW-0833">Ubl conjugation pathway</keyword>
<proteinExistence type="evidence at transcript level"/>
<dbReference type="EC" id="3.4.22.-" evidence="2"/>
<dbReference type="EMBL" id="AY570552">
    <property type="protein sequence ID" value="AAS78584.1"/>
    <property type="molecule type" value="mRNA"/>
</dbReference>
<dbReference type="EMBL" id="AJ720212">
    <property type="protein sequence ID" value="CAG31871.1"/>
    <property type="molecule type" value="mRNA"/>
</dbReference>
<dbReference type="RefSeq" id="NP_998738.1">
    <molecule id="Q6PZ02-1"/>
    <property type="nucleotide sequence ID" value="NM_213573.2"/>
</dbReference>
<dbReference type="SMR" id="Q6PZ02"/>
<dbReference type="FunCoup" id="Q6PZ02">
    <property type="interactions" value="1506"/>
</dbReference>
<dbReference type="STRING" id="9031.ENSGALP00000072484"/>
<dbReference type="MEROPS" id="C54.003"/>
<dbReference type="GlyGen" id="Q6PZ02">
    <property type="glycosylation" value="1 site"/>
</dbReference>
<dbReference type="PaxDb" id="9031-ENSGALP00000010165"/>
<dbReference type="GeneID" id="404750"/>
<dbReference type="KEGG" id="gga:404750"/>
<dbReference type="CTD" id="23192"/>
<dbReference type="VEuPathDB" id="HostDB:geneid_404750"/>
<dbReference type="eggNOG" id="KOG2674">
    <property type="taxonomic scope" value="Eukaryota"/>
</dbReference>
<dbReference type="InParanoid" id="Q6PZ02"/>
<dbReference type="OrthoDB" id="2960936at2759"/>
<dbReference type="PhylomeDB" id="Q6PZ02"/>
<dbReference type="Reactome" id="R-GGA-1632852">
    <property type="pathway name" value="Macroautophagy"/>
</dbReference>
<dbReference type="PRO" id="PR:Q6PZ02"/>
<dbReference type="Proteomes" id="UP000000539">
    <property type="component" value="Chromosome 9"/>
</dbReference>
<dbReference type="Bgee" id="ENSGALG00000006298">
    <property type="expression patterns" value="Expressed in brain and 13 other cell types or tissues"/>
</dbReference>
<dbReference type="GO" id="GO:0005776">
    <property type="term" value="C:autophagosome"/>
    <property type="evidence" value="ECO:0007669"/>
    <property type="project" value="UniProtKB-SubCell"/>
</dbReference>
<dbReference type="GO" id="GO:0005737">
    <property type="term" value="C:cytoplasm"/>
    <property type="evidence" value="ECO:0000318"/>
    <property type="project" value="GO_Central"/>
</dbReference>
<dbReference type="GO" id="GO:0031410">
    <property type="term" value="C:cytoplasmic vesicle"/>
    <property type="evidence" value="ECO:0007669"/>
    <property type="project" value="UniProtKB-KW"/>
</dbReference>
<dbReference type="GO" id="GO:0005829">
    <property type="term" value="C:cytosol"/>
    <property type="evidence" value="ECO:0007669"/>
    <property type="project" value="UniProtKB-SubCell"/>
</dbReference>
<dbReference type="GO" id="GO:0005783">
    <property type="term" value="C:endoplasmic reticulum"/>
    <property type="evidence" value="ECO:0007669"/>
    <property type="project" value="UniProtKB-SubCell"/>
</dbReference>
<dbReference type="GO" id="GO:0005739">
    <property type="term" value="C:mitochondrion"/>
    <property type="evidence" value="ECO:0007669"/>
    <property type="project" value="UniProtKB-SubCell"/>
</dbReference>
<dbReference type="GO" id="GO:0004197">
    <property type="term" value="F:cysteine-type endopeptidase activity"/>
    <property type="evidence" value="ECO:0000318"/>
    <property type="project" value="GO_Central"/>
</dbReference>
<dbReference type="GO" id="GO:0019786">
    <property type="term" value="F:protein-phosphatidylethanolamide deconjugating activity"/>
    <property type="evidence" value="ECO:0000318"/>
    <property type="project" value="GO_Central"/>
</dbReference>
<dbReference type="GO" id="GO:0035973">
    <property type="term" value="P:aggrephagy"/>
    <property type="evidence" value="ECO:0000318"/>
    <property type="project" value="GO_Central"/>
</dbReference>
<dbReference type="GO" id="GO:0000045">
    <property type="term" value="P:autophagosome assembly"/>
    <property type="evidence" value="ECO:0000318"/>
    <property type="project" value="GO_Central"/>
</dbReference>
<dbReference type="GO" id="GO:0006914">
    <property type="term" value="P:autophagy"/>
    <property type="evidence" value="ECO:0000250"/>
    <property type="project" value="UniProtKB"/>
</dbReference>
<dbReference type="GO" id="GO:0016237">
    <property type="term" value="P:microautophagy"/>
    <property type="evidence" value="ECO:0000250"/>
    <property type="project" value="UniProtKB"/>
</dbReference>
<dbReference type="GO" id="GO:0000423">
    <property type="term" value="P:mitophagy"/>
    <property type="evidence" value="ECO:0000250"/>
    <property type="project" value="UniProtKB"/>
</dbReference>
<dbReference type="GO" id="GO:0031173">
    <property type="term" value="P:otolith mineralization completed early in development"/>
    <property type="evidence" value="ECO:0000250"/>
    <property type="project" value="UniProtKB"/>
</dbReference>
<dbReference type="GO" id="GO:0034727">
    <property type="term" value="P:piecemeal microautophagy of the nucleus"/>
    <property type="evidence" value="ECO:0000318"/>
    <property type="project" value="GO_Central"/>
</dbReference>
<dbReference type="GO" id="GO:0016485">
    <property type="term" value="P:protein processing"/>
    <property type="evidence" value="ECO:0000318"/>
    <property type="project" value="GO_Central"/>
</dbReference>
<dbReference type="GO" id="GO:0015031">
    <property type="term" value="P:protein transport"/>
    <property type="evidence" value="ECO:0007669"/>
    <property type="project" value="UniProtKB-KW"/>
</dbReference>
<dbReference type="InterPro" id="IPR046793">
    <property type="entry name" value="ATG4_LIR"/>
</dbReference>
<dbReference type="InterPro" id="IPR038765">
    <property type="entry name" value="Papain-like_cys_pep_sf"/>
</dbReference>
<dbReference type="InterPro" id="IPR005078">
    <property type="entry name" value="Peptidase_C54"/>
</dbReference>
<dbReference type="InterPro" id="IPR046792">
    <property type="entry name" value="Peptidase_C54_cat"/>
</dbReference>
<dbReference type="PANTHER" id="PTHR22624">
    <property type="entry name" value="CYSTEINE PROTEASE ATG4"/>
    <property type="match status" value="1"/>
</dbReference>
<dbReference type="PANTHER" id="PTHR22624:SF39">
    <property type="entry name" value="CYSTEINE PROTEASE ATG4B"/>
    <property type="match status" value="1"/>
</dbReference>
<dbReference type="Pfam" id="PF20166">
    <property type="entry name" value="ATG4_LIR"/>
    <property type="match status" value="1"/>
</dbReference>
<dbReference type="Pfam" id="PF03416">
    <property type="entry name" value="Peptidase_C54"/>
    <property type="match status" value="1"/>
</dbReference>
<dbReference type="SUPFAM" id="SSF54001">
    <property type="entry name" value="Cysteine proteinases"/>
    <property type="match status" value="1"/>
</dbReference>
<evidence type="ECO:0000250" key="1">
    <source>
        <dbReference type="UniProtKB" id="Q9Y4P1"/>
    </source>
</evidence>
<evidence type="ECO:0000269" key="2">
    <source>
    </source>
</evidence>
<evidence type="ECO:0000303" key="3">
    <source>
    </source>
</evidence>
<evidence type="ECO:0000303" key="4">
    <source>
    </source>
</evidence>
<evidence type="ECO:0000305" key="5"/>
<feature type="chain" id="PRO_0000215846" description="Cysteine protease ATG4B">
    <location>
        <begin position="1"/>
        <end position="393"/>
    </location>
</feature>
<feature type="short sequence motif" description="LIR" evidence="1">
    <location>
        <begin position="388"/>
        <end position="391"/>
    </location>
</feature>
<feature type="active site" description="Nucleophile" evidence="1">
    <location>
        <position position="73"/>
    </location>
</feature>
<feature type="active site" evidence="1">
    <location>
        <position position="278"/>
    </location>
</feature>
<feature type="active site" evidence="1">
    <location>
        <position position="280"/>
    </location>
</feature>
<feature type="splice variant" id="VSP_013035" description="In isoform 2." evidence="4">
    <original>GFFCHTEEDFNDWCHQIKKLSLVR</original>
    <variation>VCSCCLFSTQLRNSRSLLTGTWLR</variation>
    <location>
        <begin position="320"/>
        <end position="343"/>
    </location>
</feature>
<feature type="splice variant" id="VSP_013036" description="In isoform 2." evidence="4">
    <location>
        <begin position="344"/>
        <end position="393"/>
    </location>
</feature>
<feature type="sequence conflict" description="In Ref. 2; CAG31871." evidence="5" ref="2">
    <original>G</original>
    <variation>C</variation>
    <location>
        <position position="29"/>
    </location>
</feature>
<reference key="1">
    <citation type="journal article" date="2004" name="J. Virol.">
        <title>Processing of a pestivirus protein by a cellular protease specific for light chain 3 of microtubule-associated proteins.</title>
        <authorList>
            <person name="Fricke J."/>
            <person name="Voss C."/>
            <person name="Thumm M."/>
            <person name="Meyers G."/>
        </authorList>
    </citation>
    <scope>NUCLEOTIDE SEQUENCE [MRNA] (ISOFORM 1)</scope>
    <scope>FUNCTION</scope>
</reference>
<reference key="2">
    <citation type="journal article" date="2005" name="Genome Biol.">
        <title>Full-length cDNAs from chicken bursal lymphocytes to facilitate gene function analysis.</title>
        <authorList>
            <person name="Caldwell R.B."/>
            <person name="Kierzek A.M."/>
            <person name="Arakawa H."/>
            <person name="Bezzubov Y."/>
            <person name="Zaim J."/>
            <person name="Fiedler P."/>
            <person name="Kutter S."/>
            <person name="Blagodatski A."/>
            <person name="Kostovska D."/>
            <person name="Koter M."/>
            <person name="Plachy J."/>
            <person name="Carninci P."/>
            <person name="Hayashizaki Y."/>
            <person name="Buerstedde J.-M."/>
        </authorList>
    </citation>
    <scope>NUCLEOTIDE SEQUENCE [LARGE SCALE MRNA] (ISOFORM 2)</scope>
    <source>
        <strain>CB</strain>
        <tissue>Bursa of Fabricius</tissue>
    </source>
</reference>
<sequence length="393" mass="44531">MDAATLTYDTLRFEYEDFPETKEPVWILGRKYSVFTEKEEILLDVTSRLWFTYRKNFPAIGGTGPTSDTGWGCMLRCGQMIFAQALVCRHLGRDWRWIKGKRQTDNYFSVLNAFIDKKDSYYSIHQIAQMGVGEGKSIGQWYGPNTVAQVLKKLATFDTWSSLAVHIAMDNTVVMEEIRRLCQSNFSCAGAAACPAVEADVLYNGYPEEAGVRDKLSLWKPLVLLIPLRLGLTEINEAYIETLKHCFMMPQSLGVIGGKPNSAHYFIGYVGEELIYLDPHTTQPAVEPSDSGCLPDESFHCQHPPCRMSIAELDPSIAVGFFCHTEEDFNDWCHQIKKLSLVRGALPMFELVERQPSHFSNPDVLNLTPDSSDADRLERFFDSEDEDFEILSL</sequence>
<organism>
    <name type="scientific">Gallus gallus</name>
    <name type="common">Chicken</name>
    <dbReference type="NCBI Taxonomy" id="9031"/>
    <lineage>
        <taxon>Eukaryota</taxon>
        <taxon>Metazoa</taxon>
        <taxon>Chordata</taxon>
        <taxon>Craniata</taxon>
        <taxon>Vertebrata</taxon>
        <taxon>Euteleostomi</taxon>
        <taxon>Archelosauria</taxon>
        <taxon>Archosauria</taxon>
        <taxon>Dinosauria</taxon>
        <taxon>Saurischia</taxon>
        <taxon>Theropoda</taxon>
        <taxon>Coelurosauria</taxon>
        <taxon>Aves</taxon>
        <taxon>Neognathae</taxon>
        <taxon>Galloanserae</taxon>
        <taxon>Galliformes</taxon>
        <taxon>Phasianidae</taxon>
        <taxon>Phasianinae</taxon>
        <taxon>Gallus</taxon>
    </lineage>
</organism>